<name>Y2440_MYCBO</name>
<feature type="chain" id="PRO_0000209779" description="DegV domain-containing protein Mb2440c">
    <location>
        <begin position="1"/>
        <end position="280"/>
    </location>
</feature>
<feature type="domain" description="DegV" evidence="3">
    <location>
        <begin position="3"/>
        <end position="274"/>
    </location>
</feature>
<feature type="binding site" evidence="2">
    <location>
        <position position="89"/>
    </location>
    <ligand>
        <name>hexadecanoate</name>
        <dbReference type="ChEBI" id="CHEBI:7896"/>
    </ligand>
</feature>
<sequence>MTVVVVTDTSCRLPADLREQWSIRQVPLHILLDGLDLRDGVDEIPDDIHKRHATTAGATPVELSAAYQRALADSGGDGVVAVHISSALSGTFRAAELTAAELGPAVRVIDSRSAAMGVGFAALAAGRAAAAGDELDTVARAAAAAVSRIHAFVAVARLDNLRRSGRISGAKAWLGTALALKPLLSVDDGKLVLVQRVRTVSNATAVMIDRVCQLVGDRPAALAVHHVADPAAANDVAAALAERLPACEPAMVTAMGPVLALHVGAGAVGVCVDVGASPPA</sequence>
<accession>P67369</accession>
<accession>A0A1R3Y1Y5</accession>
<accession>P71726</accession>
<accession>X2BL43</accession>
<protein>
    <recommendedName>
        <fullName>DegV domain-containing protein Mb2440c</fullName>
    </recommendedName>
</protein>
<evidence type="ECO:0000250" key="1"/>
<evidence type="ECO:0000250" key="2">
    <source>
        <dbReference type="UniProtKB" id="Q9X1H9"/>
    </source>
</evidence>
<evidence type="ECO:0000255" key="3">
    <source>
        <dbReference type="PROSITE-ProRule" id="PRU00815"/>
    </source>
</evidence>
<dbReference type="EMBL" id="LT708304">
    <property type="protein sequence ID" value="SIU01055.1"/>
    <property type="molecule type" value="Genomic_DNA"/>
</dbReference>
<dbReference type="RefSeq" id="NP_856089.1">
    <property type="nucleotide sequence ID" value="NC_002945.3"/>
</dbReference>
<dbReference type="RefSeq" id="WP_003412381.1">
    <property type="nucleotide sequence ID" value="NC_002945.4"/>
</dbReference>
<dbReference type="SMR" id="P67369"/>
<dbReference type="KEGG" id="mbo:BQ2027_MB2440C"/>
<dbReference type="PATRIC" id="fig|233413.5.peg.2686"/>
<dbReference type="Proteomes" id="UP000001419">
    <property type="component" value="Chromosome"/>
</dbReference>
<dbReference type="GO" id="GO:0008289">
    <property type="term" value="F:lipid binding"/>
    <property type="evidence" value="ECO:0007669"/>
    <property type="project" value="UniProtKB-KW"/>
</dbReference>
<dbReference type="Gene3D" id="3.30.1180.10">
    <property type="match status" value="1"/>
</dbReference>
<dbReference type="Gene3D" id="3.40.50.10170">
    <property type="match status" value="1"/>
</dbReference>
<dbReference type="InterPro" id="IPR003797">
    <property type="entry name" value="DegV"/>
</dbReference>
<dbReference type="InterPro" id="IPR043168">
    <property type="entry name" value="DegV_C"/>
</dbReference>
<dbReference type="InterPro" id="IPR050270">
    <property type="entry name" value="DegV_domain_contain"/>
</dbReference>
<dbReference type="NCBIfam" id="TIGR00762">
    <property type="entry name" value="DegV"/>
    <property type="match status" value="1"/>
</dbReference>
<dbReference type="PANTHER" id="PTHR33434">
    <property type="entry name" value="DEGV DOMAIN-CONTAINING PROTEIN DR_1986-RELATED"/>
    <property type="match status" value="1"/>
</dbReference>
<dbReference type="PANTHER" id="PTHR33434:SF2">
    <property type="entry name" value="FATTY ACID-BINDING PROTEIN TM_1468"/>
    <property type="match status" value="1"/>
</dbReference>
<dbReference type="Pfam" id="PF02645">
    <property type="entry name" value="DegV"/>
    <property type="match status" value="1"/>
</dbReference>
<dbReference type="SUPFAM" id="SSF82549">
    <property type="entry name" value="DAK1/DegV-like"/>
    <property type="match status" value="1"/>
</dbReference>
<dbReference type="PROSITE" id="PS51482">
    <property type="entry name" value="DEGV"/>
    <property type="match status" value="1"/>
</dbReference>
<organism>
    <name type="scientific">Mycobacterium bovis (strain ATCC BAA-935 / AF2122/97)</name>
    <dbReference type="NCBI Taxonomy" id="233413"/>
    <lineage>
        <taxon>Bacteria</taxon>
        <taxon>Bacillati</taxon>
        <taxon>Actinomycetota</taxon>
        <taxon>Actinomycetes</taxon>
        <taxon>Mycobacteriales</taxon>
        <taxon>Mycobacteriaceae</taxon>
        <taxon>Mycobacterium</taxon>
        <taxon>Mycobacterium tuberculosis complex</taxon>
    </lineage>
</organism>
<proteinExistence type="inferred from homology"/>
<gene>
    <name type="ordered locus">BQ2027_MB2440C</name>
</gene>
<reference key="1">
    <citation type="journal article" date="2003" name="Proc. Natl. Acad. Sci. U.S.A.">
        <title>The complete genome sequence of Mycobacterium bovis.</title>
        <authorList>
            <person name="Garnier T."/>
            <person name="Eiglmeier K."/>
            <person name="Camus J.-C."/>
            <person name="Medina N."/>
            <person name="Mansoor H."/>
            <person name="Pryor M."/>
            <person name="Duthoy S."/>
            <person name="Grondin S."/>
            <person name="Lacroix C."/>
            <person name="Monsempe C."/>
            <person name="Simon S."/>
            <person name="Harris B."/>
            <person name="Atkin R."/>
            <person name="Doggett J."/>
            <person name="Mayes R."/>
            <person name="Keating L."/>
            <person name="Wheeler P.R."/>
            <person name="Parkhill J."/>
            <person name="Barrell B.G."/>
            <person name="Cole S.T."/>
            <person name="Gordon S.V."/>
            <person name="Hewinson R.G."/>
        </authorList>
    </citation>
    <scope>NUCLEOTIDE SEQUENCE [LARGE SCALE GENOMIC DNA]</scope>
    <source>
        <strain>ATCC BAA-935 / AF2122/97</strain>
    </source>
</reference>
<reference key="2">
    <citation type="journal article" date="2017" name="Genome Announc.">
        <title>Updated reference genome sequence and annotation of Mycobacterium bovis AF2122/97.</title>
        <authorList>
            <person name="Malone K.M."/>
            <person name="Farrell D."/>
            <person name="Stuber T.P."/>
            <person name="Schubert O.T."/>
            <person name="Aebersold R."/>
            <person name="Robbe-Austerman S."/>
            <person name="Gordon S.V."/>
        </authorList>
    </citation>
    <scope>NUCLEOTIDE SEQUENCE [LARGE SCALE GENOMIC DNA]</scope>
    <scope>GENOME REANNOTATION</scope>
    <source>
        <strain>ATCC BAA-935 / AF2122/97</strain>
    </source>
</reference>
<comment type="function">
    <text evidence="1">May bind long-chain fatty acids, such as palmitate, and may play a role in lipid transport or fatty acid metabolism.</text>
</comment>
<keyword id="KW-0446">Lipid-binding</keyword>
<keyword id="KW-1185">Reference proteome</keyword>